<name>RUTB_SERP5</name>
<keyword id="KW-0378">Hydrolase</keyword>
<proteinExistence type="inferred from homology"/>
<protein>
    <recommendedName>
        <fullName evidence="1">Ureidoacrylate amidohydrolase RutB</fullName>
        <ecNumber evidence="1">3.5.1.110</ecNumber>
    </recommendedName>
</protein>
<feature type="chain" id="PRO_0000402701" description="Ureidoacrylate amidohydrolase RutB">
    <location>
        <begin position="1"/>
        <end position="248"/>
    </location>
</feature>
<feature type="active site" description="Proton acceptor" evidence="1">
    <location>
        <position position="43"/>
    </location>
</feature>
<feature type="active site" evidence="1">
    <location>
        <position position="152"/>
    </location>
</feature>
<feature type="active site" description="Nucleophile" evidence="1">
    <location>
        <position position="185"/>
    </location>
</feature>
<accession>A8GCT5</accession>
<evidence type="ECO:0000255" key="1">
    <source>
        <dbReference type="HAMAP-Rule" id="MF_00830"/>
    </source>
</evidence>
<gene>
    <name evidence="1" type="primary">rutB</name>
    <name type="ordered locus">Spro_1822</name>
</gene>
<comment type="function">
    <text evidence="1">Hydrolyzes ureidoacrylate to form aminoacrylate and carbamate. The carbamate hydrolyzes spontaneously, thereby releasing one of the nitrogen atoms of the pyrimidine ring as ammonia and one of its carbon atoms as CO2.</text>
</comment>
<comment type="catalytic activity">
    <reaction evidence="1">
        <text>(Z)-3-ureidoacrylate + H2O + H(+) = (Z)-3-aminoacrylate + NH4(+) + CO2</text>
        <dbReference type="Rhea" id="RHEA:42624"/>
        <dbReference type="ChEBI" id="CHEBI:15377"/>
        <dbReference type="ChEBI" id="CHEBI:15378"/>
        <dbReference type="ChEBI" id="CHEBI:16526"/>
        <dbReference type="ChEBI" id="CHEBI:28938"/>
        <dbReference type="ChEBI" id="CHEBI:59891"/>
        <dbReference type="ChEBI" id="CHEBI:59894"/>
        <dbReference type="EC" id="3.5.1.110"/>
    </reaction>
</comment>
<comment type="catalytic activity">
    <reaction evidence="1">
        <text>(Z)-3-ureidoacrylate + H2O = (Z)-3-aminoacrylate + carbamate + H(+)</text>
        <dbReference type="Rhea" id="RHEA:31603"/>
        <dbReference type="ChEBI" id="CHEBI:13941"/>
        <dbReference type="ChEBI" id="CHEBI:15377"/>
        <dbReference type="ChEBI" id="CHEBI:15378"/>
        <dbReference type="ChEBI" id="CHEBI:59891"/>
        <dbReference type="ChEBI" id="CHEBI:59894"/>
    </reaction>
</comment>
<comment type="catalytic activity">
    <reaction evidence="1">
        <text>(Z)-2-methylureidoacrylate + H2O + H(+) = (Z)-2-methylaminoacrylate + NH4(+) + CO2</text>
        <dbReference type="Rhea" id="RHEA:42620"/>
        <dbReference type="ChEBI" id="CHEBI:15377"/>
        <dbReference type="ChEBI" id="CHEBI:15378"/>
        <dbReference type="ChEBI" id="CHEBI:16526"/>
        <dbReference type="ChEBI" id="CHEBI:28938"/>
        <dbReference type="ChEBI" id="CHEBI:143783"/>
        <dbReference type="ChEBI" id="CHEBI:145735"/>
        <dbReference type="EC" id="3.5.1.110"/>
    </reaction>
</comment>
<comment type="similarity">
    <text evidence="1">Belongs to the isochorismatase family. RutB subfamily.</text>
</comment>
<organism>
    <name type="scientific">Serratia proteamaculans (strain 568)</name>
    <dbReference type="NCBI Taxonomy" id="399741"/>
    <lineage>
        <taxon>Bacteria</taxon>
        <taxon>Pseudomonadati</taxon>
        <taxon>Pseudomonadota</taxon>
        <taxon>Gammaproteobacteria</taxon>
        <taxon>Enterobacterales</taxon>
        <taxon>Yersiniaceae</taxon>
        <taxon>Serratia</taxon>
    </lineage>
</organism>
<sequence length="248" mass="27186">MKIVENQPVVRRQSPQAEVTLTLPARPEAIAFAPQETALIVVDMQNAYASQGGYLDLAGFDISATAPVIANIKRAISAARAAGIKVIFFQNGWDNQYVEAGGQGSPNWHKSNALKTMRKRPELMGKLLARGDWDYDLVDELQPQAGDIVLPKPRYSGFFNTQLDSLLRSYGIHHLVFTGIATNVCVESTLRDGFFLEYFGIVLADATHQAGPQFAQQAALYNIETFFGWVSDVDSFCNTLAAPLSQTA</sequence>
<dbReference type="EC" id="3.5.1.110" evidence="1"/>
<dbReference type="EMBL" id="CP000826">
    <property type="protein sequence ID" value="ABV40925.1"/>
    <property type="molecule type" value="Genomic_DNA"/>
</dbReference>
<dbReference type="SMR" id="A8GCT5"/>
<dbReference type="STRING" id="399741.Spro_1822"/>
<dbReference type="KEGG" id="spe:Spro_1822"/>
<dbReference type="eggNOG" id="COG1335">
    <property type="taxonomic scope" value="Bacteria"/>
</dbReference>
<dbReference type="HOGENOM" id="CLU_068979_8_0_6"/>
<dbReference type="GO" id="GO:0016811">
    <property type="term" value="F:hydrolase activity, acting on carbon-nitrogen (but not peptide) bonds, in linear amides"/>
    <property type="evidence" value="ECO:0007669"/>
    <property type="project" value="UniProtKB-UniRule"/>
</dbReference>
<dbReference type="GO" id="GO:0019740">
    <property type="term" value="P:nitrogen utilization"/>
    <property type="evidence" value="ECO:0007669"/>
    <property type="project" value="UniProtKB-UniRule"/>
</dbReference>
<dbReference type="GO" id="GO:0006212">
    <property type="term" value="P:uracil catabolic process"/>
    <property type="evidence" value="ECO:0007669"/>
    <property type="project" value="UniProtKB-UniRule"/>
</dbReference>
<dbReference type="CDD" id="cd00431">
    <property type="entry name" value="cysteine_hydrolases"/>
    <property type="match status" value="1"/>
</dbReference>
<dbReference type="Gene3D" id="3.40.50.850">
    <property type="entry name" value="Isochorismatase-like"/>
    <property type="match status" value="1"/>
</dbReference>
<dbReference type="HAMAP" id="MF_00830">
    <property type="entry name" value="RutB"/>
    <property type="match status" value="1"/>
</dbReference>
<dbReference type="InterPro" id="IPR000868">
    <property type="entry name" value="Isochorismatase-like_dom"/>
</dbReference>
<dbReference type="InterPro" id="IPR050272">
    <property type="entry name" value="Isochorismatase-like_hydrls"/>
</dbReference>
<dbReference type="InterPro" id="IPR036380">
    <property type="entry name" value="Isochorismatase-like_sf"/>
</dbReference>
<dbReference type="InterPro" id="IPR019916">
    <property type="entry name" value="RutB"/>
</dbReference>
<dbReference type="NCBIfam" id="TIGR03614">
    <property type="entry name" value="RutB"/>
    <property type="match status" value="1"/>
</dbReference>
<dbReference type="PANTHER" id="PTHR43540:SF6">
    <property type="entry name" value="ISOCHORISMATASE-LIKE DOMAIN-CONTAINING PROTEIN"/>
    <property type="match status" value="1"/>
</dbReference>
<dbReference type="PANTHER" id="PTHR43540">
    <property type="entry name" value="PEROXYUREIDOACRYLATE/UREIDOACRYLATE AMIDOHYDROLASE-RELATED"/>
    <property type="match status" value="1"/>
</dbReference>
<dbReference type="Pfam" id="PF00857">
    <property type="entry name" value="Isochorismatase"/>
    <property type="match status" value="1"/>
</dbReference>
<dbReference type="SUPFAM" id="SSF52499">
    <property type="entry name" value="Isochorismatase-like hydrolases"/>
    <property type="match status" value="1"/>
</dbReference>
<reference key="1">
    <citation type="submission" date="2007-09" db="EMBL/GenBank/DDBJ databases">
        <title>Complete sequence of chromosome of Serratia proteamaculans 568.</title>
        <authorList>
            <consortium name="US DOE Joint Genome Institute"/>
            <person name="Copeland A."/>
            <person name="Lucas S."/>
            <person name="Lapidus A."/>
            <person name="Barry K."/>
            <person name="Glavina del Rio T."/>
            <person name="Dalin E."/>
            <person name="Tice H."/>
            <person name="Pitluck S."/>
            <person name="Chain P."/>
            <person name="Malfatti S."/>
            <person name="Shin M."/>
            <person name="Vergez L."/>
            <person name="Schmutz J."/>
            <person name="Larimer F."/>
            <person name="Land M."/>
            <person name="Hauser L."/>
            <person name="Kyrpides N."/>
            <person name="Kim E."/>
            <person name="Taghavi S."/>
            <person name="Newman L."/>
            <person name="Vangronsveld J."/>
            <person name="van der Lelie D."/>
            <person name="Richardson P."/>
        </authorList>
    </citation>
    <scope>NUCLEOTIDE SEQUENCE [LARGE SCALE GENOMIC DNA]</scope>
    <source>
        <strain>568</strain>
    </source>
</reference>